<reference key="1">
    <citation type="submission" date="2006-12" db="EMBL/GenBank/DDBJ databases">
        <title>Complete sequence of Acidovorax avenae subsp. citrulli AAC00-1.</title>
        <authorList>
            <person name="Copeland A."/>
            <person name="Lucas S."/>
            <person name="Lapidus A."/>
            <person name="Barry K."/>
            <person name="Detter J.C."/>
            <person name="Glavina del Rio T."/>
            <person name="Dalin E."/>
            <person name="Tice H."/>
            <person name="Pitluck S."/>
            <person name="Kiss H."/>
            <person name="Brettin T."/>
            <person name="Bruce D."/>
            <person name="Han C."/>
            <person name="Tapia R."/>
            <person name="Gilna P."/>
            <person name="Schmutz J."/>
            <person name="Larimer F."/>
            <person name="Land M."/>
            <person name="Hauser L."/>
            <person name="Kyrpides N."/>
            <person name="Kim E."/>
            <person name="Stahl D."/>
            <person name="Richardson P."/>
        </authorList>
    </citation>
    <scope>NUCLEOTIDE SEQUENCE [LARGE SCALE GENOMIC DNA]</scope>
    <source>
        <strain>AAC00-1</strain>
    </source>
</reference>
<sequence length="307" mass="33692">MLQQRTIKTLTRAVGVGLHSGQRVELTLRPAAPDTGIVFRRVDLPEPVDIPIRAESVVDTRMASTIGVGGAKVHTVEHLMSACAGLGLDNLYIDITAEEVPILDGSSASFVFLLQSAGVVLQNAPKKFIRVTRPVEVREGEGQQLKWARLEPYHGYKLRFEIDFAHPAVDSTGQSVEFDLGSGNYTRDIARARTFGFTKDVEMMRASGLALGGGLDNAIVMDDYKVLNADGLRYDDEFVKHKILDAIGDLYIVGRPLLAAYSAFRSGHAMNNRLLRELLAHEDAWEIATFESERQAPSGFAAPVQAW</sequence>
<accession>A1TKD7</accession>
<proteinExistence type="inferred from homology"/>
<feature type="chain" id="PRO_1000190874" description="UDP-3-O-acyl-N-acetylglucosamine deacetylase">
    <location>
        <begin position="1"/>
        <end position="307"/>
    </location>
</feature>
<feature type="active site" description="Proton donor" evidence="1">
    <location>
        <position position="268"/>
    </location>
</feature>
<feature type="binding site" evidence="1">
    <location>
        <position position="78"/>
    </location>
    <ligand>
        <name>Zn(2+)</name>
        <dbReference type="ChEBI" id="CHEBI:29105"/>
    </ligand>
</feature>
<feature type="binding site" evidence="1">
    <location>
        <position position="241"/>
    </location>
    <ligand>
        <name>Zn(2+)</name>
        <dbReference type="ChEBI" id="CHEBI:29105"/>
    </ligand>
</feature>
<feature type="binding site" evidence="1">
    <location>
        <position position="245"/>
    </location>
    <ligand>
        <name>Zn(2+)</name>
        <dbReference type="ChEBI" id="CHEBI:29105"/>
    </ligand>
</feature>
<protein>
    <recommendedName>
        <fullName evidence="1">UDP-3-O-acyl-N-acetylglucosamine deacetylase</fullName>
        <shortName evidence="1">UDP-3-O-acyl-GlcNAc deacetylase</shortName>
        <ecNumber evidence="1">3.5.1.108</ecNumber>
    </recommendedName>
    <alternativeName>
        <fullName evidence="1">UDP-3-O-[R-3-hydroxymyristoyl]-N-acetylglucosamine deacetylase</fullName>
    </alternativeName>
</protein>
<keyword id="KW-0378">Hydrolase</keyword>
<keyword id="KW-0441">Lipid A biosynthesis</keyword>
<keyword id="KW-0444">Lipid biosynthesis</keyword>
<keyword id="KW-0443">Lipid metabolism</keyword>
<keyword id="KW-0479">Metal-binding</keyword>
<keyword id="KW-0862">Zinc</keyword>
<name>LPXC_PARC0</name>
<dbReference type="EC" id="3.5.1.108" evidence="1"/>
<dbReference type="EMBL" id="CP000512">
    <property type="protein sequence ID" value="ABM31425.1"/>
    <property type="molecule type" value="Genomic_DNA"/>
</dbReference>
<dbReference type="RefSeq" id="WP_011793985.1">
    <property type="nucleotide sequence ID" value="NC_008752.1"/>
</dbReference>
<dbReference type="SMR" id="A1TKD7"/>
<dbReference type="STRING" id="397945.Aave_0827"/>
<dbReference type="GeneID" id="79790483"/>
<dbReference type="KEGG" id="aav:Aave_0827"/>
<dbReference type="eggNOG" id="COG0774">
    <property type="taxonomic scope" value="Bacteria"/>
</dbReference>
<dbReference type="HOGENOM" id="CLU_046528_1_0_4"/>
<dbReference type="OrthoDB" id="9802746at2"/>
<dbReference type="UniPathway" id="UPA00359">
    <property type="reaction ID" value="UER00478"/>
</dbReference>
<dbReference type="Proteomes" id="UP000002596">
    <property type="component" value="Chromosome"/>
</dbReference>
<dbReference type="GO" id="GO:0016020">
    <property type="term" value="C:membrane"/>
    <property type="evidence" value="ECO:0007669"/>
    <property type="project" value="GOC"/>
</dbReference>
<dbReference type="GO" id="GO:0046872">
    <property type="term" value="F:metal ion binding"/>
    <property type="evidence" value="ECO:0007669"/>
    <property type="project" value="UniProtKB-KW"/>
</dbReference>
<dbReference type="GO" id="GO:0103117">
    <property type="term" value="F:UDP-3-O-acyl-N-acetylglucosamine deacetylase activity"/>
    <property type="evidence" value="ECO:0007669"/>
    <property type="project" value="UniProtKB-UniRule"/>
</dbReference>
<dbReference type="GO" id="GO:0009245">
    <property type="term" value="P:lipid A biosynthetic process"/>
    <property type="evidence" value="ECO:0007669"/>
    <property type="project" value="UniProtKB-UniRule"/>
</dbReference>
<dbReference type="Gene3D" id="3.30.230.20">
    <property type="entry name" value="lpxc deacetylase, domain 1"/>
    <property type="match status" value="1"/>
</dbReference>
<dbReference type="Gene3D" id="3.30.1700.10">
    <property type="entry name" value="lpxc deacetylase, domain 2"/>
    <property type="match status" value="1"/>
</dbReference>
<dbReference type="HAMAP" id="MF_00388">
    <property type="entry name" value="LpxC"/>
    <property type="match status" value="1"/>
</dbReference>
<dbReference type="InterPro" id="IPR020568">
    <property type="entry name" value="Ribosomal_Su5_D2-typ_SF"/>
</dbReference>
<dbReference type="InterPro" id="IPR004463">
    <property type="entry name" value="UDP-acyl_GlcNac_deAcase"/>
</dbReference>
<dbReference type="InterPro" id="IPR011334">
    <property type="entry name" value="UDP-acyl_GlcNac_deAcase_C"/>
</dbReference>
<dbReference type="InterPro" id="IPR015870">
    <property type="entry name" value="UDP-acyl_N-AcGlcN_deAcase_N"/>
</dbReference>
<dbReference type="NCBIfam" id="TIGR00325">
    <property type="entry name" value="lpxC"/>
    <property type="match status" value="1"/>
</dbReference>
<dbReference type="PANTHER" id="PTHR33694">
    <property type="entry name" value="UDP-3-O-ACYL-N-ACETYLGLUCOSAMINE DEACETYLASE 1, MITOCHONDRIAL-RELATED"/>
    <property type="match status" value="1"/>
</dbReference>
<dbReference type="PANTHER" id="PTHR33694:SF1">
    <property type="entry name" value="UDP-3-O-ACYL-N-ACETYLGLUCOSAMINE DEACETYLASE 1, MITOCHONDRIAL-RELATED"/>
    <property type="match status" value="1"/>
</dbReference>
<dbReference type="Pfam" id="PF03331">
    <property type="entry name" value="LpxC"/>
    <property type="match status" value="1"/>
</dbReference>
<dbReference type="SUPFAM" id="SSF54211">
    <property type="entry name" value="Ribosomal protein S5 domain 2-like"/>
    <property type="match status" value="2"/>
</dbReference>
<evidence type="ECO:0000255" key="1">
    <source>
        <dbReference type="HAMAP-Rule" id="MF_00388"/>
    </source>
</evidence>
<organism>
    <name type="scientific">Paracidovorax citrulli (strain AAC00-1)</name>
    <name type="common">Acidovorax citrulli</name>
    <dbReference type="NCBI Taxonomy" id="397945"/>
    <lineage>
        <taxon>Bacteria</taxon>
        <taxon>Pseudomonadati</taxon>
        <taxon>Pseudomonadota</taxon>
        <taxon>Betaproteobacteria</taxon>
        <taxon>Burkholderiales</taxon>
        <taxon>Comamonadaceae</taxon>
        <taxon>Paracidovorax</taxon>
    </lineage>
</organism>
<gene>
    <name evidence="1" type="primary">lpxC</name>
    <name type="ordered locus">Aave_0827</name>
</gene>
<comment type="function">
    <text evidence="1">Catalyzes the hydrolysis of UDP-3-O-myristoyl-N-acetylglucosamine to form UDP-3-O-myristoylglucosamine and acetate, the committed step in lipid A biosynthesis.</text>
</comment>
<comment type="catalytic activity">
    <reaction evidence="1">
        <text>a UDP-3-O-[(3R)-3-hydroxyacyl]-N-acetyl-alpha-D-glucosamine + H2O = a UDP-3-O-[(3R)-3-hydroxyacyl]-alpha-D-glucosamine + acetate</text>
        <dbReference type="Rhea" id="RHEA:67816"/>
        <dbReference type="ChEBI" id="CHEBI:15377"/>
        <dbReference type="ChEBI" id="CHEBI:30089"/>
        <dbReference type="ChEBI" id="CHEBI:137740"/>
        <dbReference type="ChEBI" id="CHEBI:173225"/>
        <dbReference type="EC" id="3.5.1.108"/>
    </reaction>
</comment>
<comment type="cofactor">
    <cofactor evidence="1">
        <name>Zn(2+)</name>
        <dbReference type="ChEBI" id="CHEBI:29105"/>
    </cofactor>
</comment>
<comment type="pathway">
    <text evidence="1">Glycolipid biosynthesis; lipid IV(A) biosynthesis; lipid IV(A) from (3R)-3-hydroxytetradecanoyl-[acyl-carrier-protein] and UDP-N-acetyl-alpha-D-glucosamine: step 2/6.</text>
</comment>
<comment type="similarity">
    <text evidence="1">Belongs to the LpxC family.</text>
</comment>